<sequence length="172" mass="18227">MLTNPRKKIRPGELNLKEKLVHINRTAKVVKGGKRFGFNAIVVVGDGEGHVGYGLGKANEVQDAIAKGIEDAKKNVIEVPIIKGTIPHQIFAKFGAAKVLMKPATPGTGLIAGGAVRAVLEMAGVKDVLTKSLGSSNPHNVVKATVHGLQEVSDAYDVSERRGKSLQDIYEG</sequence>
<name>RS5_CHLT3</name>
<organism>
    <name type="scientific">Chloroherpeton thalassium (strain ATCC 35110 / GB-78)</name>
    <dbReference type="NCBI Taxonomy" id="517418"/>
    <lineage>
        <taxon>Bacteria</taxon>
        <taxon>Pseudomonadati</taxon>
        <taxon>Chlorobiota</taxon>
        <taxon>Chlorobiia</taxon>
        <taxon>Chlorobiales</taxon>
        <taxon>Chloroherpetonaceae</taxon>
        <taxon>Chloroherpeton</taxon>
    </lineage>
</organism>
<gene>
    <name evidence="1" type="primary">rpsE</name>
    <name type="ordered locus">Ctha_1105</name>
</gene>
<protein>
    <recommendedName>
        <fullName evidence="1">Small ribosomal subunit protein uS5</fullName>
    </recommendedName>
    <alternativeName>
        <fullName evidence="2">30S ribosomal protein S5</fullName>
    </alternativeName>
</protein>
<dbReference type="EMBL" id="CP001100">
    <property type="protein sequence ID" value="ACF13569.1"/>
    <property type="molecule type" value="Genomic_DNA"/>
</dbReference>
<dbReference type="RefSeq" id="WP_012499653.1">
    <property type="nucleotide sequence ID" value="NC_011026.1"/>
</dbReference>
<dbReference type="SMR" id="B3QYE1"/>
<dbReference type="STRING" id="517418.Ctha_1105"/>
<dbReference type="KEGG" id="cts:Ctha_1105"/>
<dbReference type="eggNOG" id="COG0098">
    <property type="taxonomic scope" value="Bacteria"/>
</dbReference>
<dbReference type="HOGENOM" id="CLU_065898_2_2_10"/>
<dbReference type="OrthoDB" id="9809045at2"/>
<dbReference type="Proteomes" id="UP000001208">
    <property type="component" value="Chromosome"/>
</dbReference>
<dbReference type="GO" id="GO:0015935">
    <property type="term" value="C:small ribosomal subunit"/>
    <property type="evidence" value="ECO:0007669"/>
    <property type="project" value="InterPro"/>
</dbReference>
<dbReference type="GO" id="GO:0019843">
    <property type="term" value="F:rRNA binding"/>
    <property type="evidence" value="ECO:0007669"/>
    <property type="project" value="UniProtKB-UniRule"/>
</dbReference>
<dbReference type="GO" id="GO:0003735">
    <property type="term" value="F:structural constituent of ribosome"/>
    <property type="evidence" value="ECO:0007669"/>
    <property type="project" value="InterPro"/>
</dbReference>
<dbReference type="GO" id="GO:0006412">
    <property type="term" value="P:translation"/>
    <property type="evidence" value="ECO:0007669"/>
    <property type="project" value="UniProtKB-UniRule"/>
</dbReference>
<dbReference type="FunFam" id="3.30.160.20:FF:000001">
    <property type="entry name" value="30S ribosomal protein S5"/>
    <property type="match status" value="1"/>
</dbReference>
<dbReference type="FunFam" id="3.30.230.10:FF:000002">
    <property type="entry name" value="30S ribosomal protein S5"/>
    <property type="match status" value="1"/>
</dbReference>
<dbReference type="Gene3D" id="3.30.160.20">
    <property type="match status" value="1"/>
</dbReference>
<dbReference type="Gene3D" id="3.30.230.10">
    <property type="match status" value="1"/>
</dbReference>
<dbReference type="HAMAP" id="MF_01307_B">
    <property type="entry name" value="Ribosomal_uS5_B"/>
    <property type="match status" value="1"/>
</dbReference>
<dbReference type="InterPro" id="IPR020568">
    <property type="entry name" value="Ribosomal_Su5_D2-typ_SF"/>
</dbReference>
<dbReference type="InterPro" id="IPR000851">
    <property type="entry name" value="Ribosomal_uS5"/>
</dbReference>
<dbReference type="InterPro" id="IPR005712">
    <property type="entry name" value="Ribosomal_uS5_bac-type"/>
</dbReference>
<dbReference type="InterPro" id="IPR005324">
    <property type="entry name" value="Ribosomal_uS5_C"/>
</dbReference>
<dbReference type="InterPro" id="IPR013810">
    <property type="entry name" value="Ribosomal_uS5_N"/>
</dbReference>
<dbReference type="InterPro" id="IPR018192">
    <property type="entry name" value="Ribosomal_uS5_N_CS"/>
</dbReference>
<dbReference type="InterPro" id="IPR014721">
    <property type="entry name" value="Ribsml_uS5_D2-typ_fold_subgr"/>
</dbReference>
<dbReference type="NCBIfam" id="TIGR01021">
    <property type="entry name" value="rpsE_bact"/>
    <property type="match status" value="1"/>
</dbReference>
<dbReference type="PANTHER" id="PTHR48432">
    <property type="entry name" value="S5 DRBM DOMAIN-CONTAINING PROTEIN"/>
    <property type="match status" value="1"/>
</dbReference>
<dbReference type="PANTHER" id="PTHR48432:SF1">
    <property type="entry name" value="S5 DRBM DOMAIN-CONTAINING PROTEIN"/>
    <property type="match status" value="1"/>
</dbReference>
<dbReference type="Pfam" id="PF00333">
    <property type="entry name" value="Ribosomal_S5"/>
    <property type="match status" value="1"/>
</dbReference>
<dbReference type="Pfam" id="PF03719">
    <property type="entry name" value="Ribosomal_S5_C"/>
    <property type="match status" value="1"/>
</dbReference>
<dbReference type="SUPFAM" id="SSF54768">
    <property type="entry name" value="dsRNA-binding domain-like"/>
    <property type="match status" value="1"/>
</dbReference>
<dbReference type="SUPFAM" id="SSF54211">
    <property type="entry name" value="Ribosomal protein S5 domain 2-like"/>
    <property type="match status" value="1"/>
</dbReference>
<dbReference type="PROSITE" id="PS00585">
    <property type="entry name" value="RIBOSOMAL_S5"/>
    <property type="match status" value="1"/>
</dbReference>
<dbReference type="PROSITE" id="PS50881">
    <property type="entry name" value="S5_DSRBD"/>
    <property type="match status" value="1"/>
</dbReference>
<comment type="function">
    <text evidence="1">With S4 and S12 plays an important role in translational accuracy.</text>
</comment>
<comment type="function">
    <text evidence="1">Located at the back of the 30S subunit body where it stabilizes the conformation of the head with respect to the body.</text>
</comment>
<comment type="subunit">
    <text evidence="1">Part of the 30S ribosomal subunit. Contacts proteins S4 and S8.</text>
</comment>
<comment type="domain">
    <text>The N-terminal domain interacts with the head of the 30S subunit; the C-terminal domain interacts with the body and contacts protein S4. The interaction surface between S4 and S5 is involved in control of translational fidelity.</text>
</comment>
<comment type="similarity">
    <text evidence="1">Belongs to the universal ribosomal protein uS5 family.</text>
</comment>
<keyword id="KW-1185">Reference proteome</keyword>
<keyword id="KW-0687">Ribonucleoprotein</keyword>
<keyword id="KW-0689">Ribosomal protein</keyword>
<keyword id="KW-0694">RNA-binding</keyword>
<keyword id="KW-0699">rRNA-binding</keyword>
<accession>B3QYE1</accession>
<proteinExistence type="inferred from homology"/>
<feature type="chain" id="PRO_1000140850" description="Small ribosomal subunit protein uS5">
    <location>
        <begin position="1"/>
        <end position="172"/>
    </location>
</feature>
<feature type="domain" description="S5 DRBM" evidence="1">
    <location>
        <begin position="16"/>
        <end position="79"/>
    </location>
</feature>
<evidence type="ECO:0000255" key="1">
    <source>
        <dbReference type="HAMAP-Rule" id="MF_01307"/>
    </source>
</evidence>
<evidence type="ECO:0000305" key="2"/>
<reference key="1">
    <citation type="submission" date="2008-06" db="EMBL/GenBank/DDBJ databases">
        <title>Complete sequence of Chloroherpeton thalassium ATCC 35110.</title>
        <authorList>
            <consortium name="US DOE Joint Genome Institute"/>
            <person name="Lucas S."/>
            <person name="Copeland A."/>
            <person name="Lapidus A."/>
            <person name="Glavina del Rio T."/>
            <person name="Dalin E."/>
            <person name="Tice H."/>
            <person name="Bruce D."/>
            <person name="Goodwin L."/>
            <person name="Pitluck S."/>
            <person name="Schmutz J."/>
            <person name="Larimer F."/>
            <person name="Land M."/>
            <person name="Hauser L."/>
            <person name="Kyrpides N."/>
            <person name="Mikhailova N."/>
            <person name="Liu Z."/>
            <person name="Li T."/>
            <person name="Zhao F."/>
            <person name="Overmann J."/>
            <person name="Bryant D.A."/>
            <person name="Richardson P."/>
        </authorList>
    </citation>
    <scope>NUCLEOTIDE SEQUENCE [LARGE SCALE GENOMIC DNA]</scope>
    <source>
        <strain>ATCC 35110 / GB-78</strain>
    </source>
</reference>